<comment type="function">
    <text evidence="1">Assembly factor required for Rieske Fe-S protein RIP1 incorporation into the cytochrome b-c1 (CIII) complex. Functions as a chaperone, binding to this subunit within the mitochondrial matrix and stabilizing it prior to its translocation and insertion into the late CIII dimeric intermediate within the mitochondrial inner membrane. Modulates the mitochondrial matrix zinc pool (By similarity).</text>
</comment>
<comment type="subunit">
    <text evidence="1">Interacts with RIP1.</text>
</comment>
<comment type="subcellular location">
    <subcellularLocation>
        <location evidence="1">Mitochondrion matrix</location>
    </subcellularLocation>
</comment>
<comment type="similarity">
    <text evidence="3">Belongs to the complex I LYR family. MZM1 subfamily.</text>
</comment>
<organism>
    <name type="scientific">Talaromyces marneffei (strain ATCC 18224 / CBS 334.59 / QM 7333)</name>
    <name type="common">Penicillium marneffei</name>
    <dbReference type="NCBI Taxonomy" id="441960"/>
    <lineage>
        <taxon>Eukaryota</taxon>
        <taxon>Fungi</taxon>
        <taxon>Dikarya</taxon>
        <taxon>Ascomycota</taxon>
        <taxon>Pezizomycotina</taxon>
        <taxon>Eurotiomycetes</taxon>
        <taxon>Eurotiomycetidae</taxon>
        <taxon>Eurotiales</taxon>
        <taxon>Trichocomaceae</taxon>
        <taxon>Talaromyces</taxon>
        <taxon>Talaromyces sect. Talaromyces</taxon>
    </lineage>
</organism>
<keyword id="KW-0143">Chaperone</keyword>
<keyword id="KW-0496">Mitochondrion</keyword>
<keyword id="KW-1185">Reference proteome</keyword>
<keyword id="KW-0809">Transit peptide</keyword>
<reference key="1">
    <citation type="journal article" date="2015" name="Genome Announc.">
        <title>Genome sequence of the AIDS-associated pathogen Penicillium marneffei (ATCC18224) and its near taxonomic relative Talaromyces stipitatus (ATCC10500).</title>
        <authorList>
            <person name="Nierman W.C."/>
            <person name="Fedorova-Abrams N.D."/>
            <person name="Andrianopoulos A."/>
        </authorList>
    </citation>
    <scope>NUCLEOTIDE SEQUENCE [LARGE SCALE GENOMIC DNA]</scope>
    <source>
        <strain>ATCC 18224 / CBS 334.59 / QM 7333</strain>
    </source>
</reference>
<proteinExistence type="inferred from homology"/>
<protein>
    <recommendedName>
        <fullName>Mitochondrial zinc maintenance protein 1, mitochondrial</fullName>
    </recommendedName>
</protein>
<dbReference type="EMBL" id="DS995905">
    <property type="protein sequence ID" value="EEA19838.1"/>
    <property type="molecule type" value="Genomic_DNA"/>
</dbReference>
<dbReference type="RefSeq" id="XP_002152775.1">
    <property type="nucleotide sequence ID" value="XM_002152739.1"/>
</dbReference>
<dbReference type="SMR" id="B6QTV3"/>
<dbReference type="STRING" id="441960.B6QTV3"/>
<dbReference type="VEuPathDB" id="FungiDB:PMAA_006060"/>
<dbReference type="HOGENOM" id="CLU_147114_2_0_1"/>
<dbReference type="OrthoDB" id="1491at28568"/>
<dbReference type="PhylomeDB" id="B6QTV3"/>
<dbReference type="Proteomes" id="UP000001294">
    <property type="component" value="Unassembled WGS sequence"/>
</dbReference>
<dbReference type="GO" id="GO:0005759">
    <property type="term" value="C:mitochondrial matrix"/>
    <property type="evidence" value="ECO:0007669"/>
    <property type="project" value="UniProtKB-SubCell"/>
</dbReference>
<dbReference type="GO" id="GO:0044183">
    <property type="term" value="F:protein folding chaperone"/>
    <property type="evidence" value="ECO:0007669"/>
    <property type="project" value="TreeGrafter"/>
</dbReference>
<dbReference type="GO" id="GO:0034551">
    <property type="term" value="P:mitochondrial respiratory chain complex III assembly"/>
    <property type="evidence" value="ECO:0007669"/>
    <property type="project" value="InterPro"/>
</dbReference>
<dbReference type="CDD" id="cd20267">
    <property type="entry name" value="Complex1_LYR_LYRM7"/>
    <property type="match status" value="1"/>
</dbReference>
<dbReference type="InterPro" id="IPR008011">
    <property type="entry name" value="Complex1_LYR_dom"/>
</dbReference>
<dbReference type="InterPro" id="IPR045298">
    <property type="entry name" value="Complex1_LYR_LYRM7"/>
</dbReference>
<dbReference type="InterPro" id="IPR050435">
    <property type="entry name" value="MZM1/LYRM7"/>
</dbReference>
<dbReference type="PANTHER" id="PTHR46749">
    <property type="entry name" value="COMPLEX III ASSEMBLY FACTOR LYRM7"/>
    <property type="match status" value="1"/>
</dbReference>
<dbReference type="PANTHER" id="PTHR46749:SF1">
    <property type="entry name" value="COMPLEX III ASSEMBLY FACTOR LYRM7"/>
    <property type="match status" value="1"/>
</dbReference>
<dbReference type="Pfam" id="PF05347">
    <property type="entry name" value="Complex1_LYR"/>
    <property type="match status" value="1"/>
</dbReference>
<accession>B6QTV3</accession>
<feature type="transit peptide" description="Mitochondrion" evidence="2">
    <location>
        <begin position="1"/>
        <end status="unknown"/>
    </location>
</feature>
<feature type="chain" id="PRO_0000405506" description="Mitochondrial zinc maintenance protein 1, mitochondrial">
    <location>
        <begin status="unknown"/>
        <end position="113"/>
    </location>
</feature>
<evidence type="ECO:0000250" key="1"/>
<evidence type="ECO:0000255" key="2"/>
<evidence type="ECO:0000305" key="3"/>
<sequence>MTAPSVSAISAYRQLLRATRIAFKDDYRILLAARSEARKQFNAHKRTAVDTPMQIQHALETASILRHNIVQGIRDAEKEDAKWELRIHDEIERGDNDSVKIGGKNVKIEKACS</sequence>
<gene>
    <name type="primary">MZM1</name>
    <name type="ORF">PMAA_006060</name>
</gene>
<name>MZM1_TALMQ</name>